<evidence type="ECO:0000250" key="1">
    <source>
        <dbReference type="UniProtKB" id="O51934"/>
    </source>
</evidence>
<evidence type="ECO:0000250" key="2">
    <source>
        <dbReference type="UniProtKB" id="Q08582"/>
    </source>
</evidence>
<evidence type="ECO:0000250" key="3">
    <source>
        <dbReference type="UniProtKB" id="Q97ZZ8"/>
    </source>
</evidence>
<evidence type="ECO:0000255" key="4">
    <source>
        <dbReference type="PROSITE-ProRule" id="PRU00541"/>
    </source>
</evidence>
<evidence type="ECO:0000255" key="5">
    <source>
        <dbReference type="PROSITE-ProRule" id="PRU00995"/>
    </source>
</evidence>
<evidence type="ECO:0000255" key="6">
    <source>
        <dbReference type="PROSITE-ProRule" id="PRU01380"/>
    </source>
</evidence>
<evidence type="ECO:0000255" key="7">
    <source>
        <dbReference type="PROSITE-ProRule" id="PRU01381"/>
    </source>
</evidence>
<evidence type="ECO:0000255" key="8">
    <source>
        <dbReference type="PROSITE-ProRule" id="PRU01383"/>
    </source>
</evidence>
<evidence type="ECO:0000269" key="9">
    <source>
    </source>
</evidence>
<evidence type="ECO:0000303" key="10">
    <source>
    </source>
</evidence>
<evidence type="ECO:0000305" key="11"/>
<evidence type="ECO:0000305" key="12">
    <source>
    </source>
</evidence>
<protein>
    <recommendedName>
        <fullName evidence="2 10">Reverse gyrase 2</fullName>
        <ecNumber evidence="2">5.6.2.-</ecNumber>
    </recommendedName>
</protein>
<proteinExistence type="evidence at transcript level"/>
<feature type="chain" id="PRO_0000459350" description="Reverse gyrase 2">
    <location>
        <begin position="1"/>
        <end position="1153"/>
    </location>
</feature>
<feature type="domain" description="Helicase ATP-binding" evidence="4">
    <location>
        <begin position="90"/>
        <end position="276"/>
    </location>
</feature>
<feature type="domain" description="Toprim" evidence="5">
    <location>
        <begin position="571"/>
        <end position="735"/>
    </location>
</feature>
<feature type="domain" description="Topo IA-type catalytic" evidence="8">
    <location>
        <begin position="751"/>
        <end position="1142"/>
    </location>
</feature>
<feature type="zinc finger region" description="RG N-terminal-type" evidence="6">
    <location>
        <begin position="1"/>
        <end position="41"/>
    </location>
</feature>
<feature type="zinc finger region" description="RG C-terminal-type" evidence="7">
    <location>
        <begin position="654"/>
        <end position="681"/>
    </location>
</feature>
<feature type="region of interest" description="Topoisomerase I" evidence="2">
    <location>
        <begin position="567"/>
        <end position="1153"/>
    </location>
</feature>
<feature type="short sequence motif" description="DEAD box" evidence="4">
    <location>
        <begin position="184"/>
        <end position="187"/>
    </location>
</feature>
<feature type="active site" description="O-(5'-phospho-DNA)-tyrosine intermediate" evidence="8">
    <location>
        <position position="894"/>
    </location>
</feature>
<feature type="binding site" evidence="2">
    <location>
        <position position="10"/>
    </location>
    <ligand>
        <name>Zn(2+)</name>
        <dbReference type="ChEBI" id="CHEBI:29105"/>
        <label>1</label>
    </ligand>
</feature>
<feature type="binding site" evidence="2">
    <location>
        <position position="13"/>
    </location>
    <ligand>
        <name>Zn(2+)</name>
        <dbReference type="ChEBI" id="CHEBI:29105"/>
        <label>1</label>
    </ligand>
</feature>
<feature type="binding site" evidence="2">
    <location>
        <position position="28"/>
    </location>
    <ligand>
        <name>Zn(2+)</name>
        <dbReference type="ChEBI" id="CHEBI:29105"/>
        <label>1</label>
    </ligand>
</feature>
<feature type="binding site" evidence="2">
    <location>
        <position position="31"/>
    </location>
    <ligand>
        <name>Zn(2+)</name>
        <dbReference type="ChEBI" id="CHEBI:29105"/>
        <label>1</label>
    </ligand>
</feature>
<feature type="binding site" evidence="2">
    <location>
        <position position="86"/>
    </location>
    <ligand>
        <name>ATP</name>
        <dbReference type="ChEBI" id="CHEBI:30616"/>
    </ligand>
</feature>
<feature type="binding site" evidence="4">
    <location>
        <begin position="103"/>
        <end position="110"/>
    </location>
    <ligand>
        <name>ATP</name>
        <dbReference type="ChEBI" id="CHEBI:30616"/>
    </ligand>
</feature>
<feature type="binding site" evidence="5">
    <location>
        <position position="577"/>
    </location>
    <ligand>
        <name>Mg(2+)</name>
        <dbReference type="ChEBI" id="CHEBI:18420"/>
        <note>catalytic</note>
    </ligand>
</feature>
<feature type="binding site" evidence="2">
    <location>
        <position position="657"/>
    </location>
    <ligand>
        <name>Zn(2+)</name>
        <dbReference type="ChEBI" id="CHEBI:29105"/>
        <label>2</label>
    </ligand>
</feature>
<feature type="binding site" evidence="2">
    <location>
        <position position="660"/>
    </location>
    <ligand>
        <name>Zn(2+)</name>
        <dbReference type="ChEBI" id="CHEBI:29105"/>
        <label>2</label>
    </ligand>
</feature>
<feature type="binding site" evidence="2">
    <location>
        <position position="671"/>
    </location>
    <ligand>
        <name>Zn(2+)</name>
        <dbReference type="ChEBI" id="CHEBI:29105"/>
        <label>2</label>
    </ligand>
</feature>
<feature type="binding site" evidence="2">
    <location>
        <position position="674"/>
    </location>
    <ligand>
        <name>Zn(2+)</name>
        <dbReference type="ChEBI" id="CHEBI:29105"/>
        <label>2</label>
    </ligand>
</feature>
<feature type="binding site" evidence="5">
    <location>
        <position position="704"/>
    </location>
    <ligand>
        <name>Mg(2+)</name>
        <dbReference type="ChEBI" id="CHEBI:18420"/>
        <note>catalytic</note>
    </ligand>
</feature>
<name>RGYR2_SULAC</name>
<organism>
    <name type="scientific">Sulfolobus acidocaldarius (strain ATCC 33909 / DSM 639 / JCM 8929 / NBRC 15157 / NCIMB 11770)</name>
    <dbReference type="NCBI Taxonomy" id="330779"/>
    <lineage>
        <taxon>Archaea</taxon>
        <taxon>Thermoproteota</taxon>
        <taxon>Thermoprotei</taxon>
        <taxon>Sulfolobales</taxon>
        <taxon>Sulfolobaceae</taxon>
        <taxon>Sulfolobus</taxon>
    </lineage>
</organism>
<accession>P0DW67</accession>
<reference key="1">
    <citation type="journal article" date="2005" name="J. Bacteriol.">
        <title>The genome of Sulfolobus acidocaldarius, a model organism of the Crenarchaeota.</title>
        <authorList>
            <person name="Chen L."/>
            <person name="Bruegger K."/>
            <person name="Skovgaard M."/>
            <person name="Redder P."/>
            <person name="She Q."/>
            <person name="Torarinsson E."/>
            <person name="Greve B."/>
            <person name="Awayez M."/>
            <person name="Zibat A."/>
            <person name="Klenk H.-P."/>
            <person name="Garrett R.A."/>
        </authorList>
    </citation>
    <scope>NUCLEOTIDE SEQUENCE [LARGE SCALE GENOMIC DNA]</scope>
    <source>
        <strain>ATCC 33909 / DSM 639 / JCM 8929 / NBRC 15157 / NCIMB 11770</strain>
    </source>
</reference>
<reference key="2">
    <citation type="journal article" date="2007" name="Proc. Natl. Acad. Sci. U.S.A.">
        <title>Genome-wide transcription map of an archaeal cell cycle.</title>
        <authorList>
            <person name="Lundgren M."/>
            <person name="Bernander R."/>
        </authorList>
    </citation>
    <scope>IDENTIFICATION</scope>
    <scope>INDUCTION</scope>
    <source>
        <strain>ATCC 33909 / DSM 639 / JCM 8929 / NBRC 15157 / NCIMB 11770</strain>
    </source>
</reference>
<sequence length="1153" mass="130819">MLKVNYLFGCPNCNGSISVDRLHAGIPCETCLPGAVEKLDIRTIYDLLVKYSTLKGYSELYMDLEMYDDILRLFKKIVGGEPWSLQRYWLNKLVRGESFSLSAPTGVGKTTTLIVYSVYSHTTSLFVVPTKSLRDQICEKLKKIGHLVSCNKPEEDKVNVVTFHSINKNIDEFVRIKPKLLMVDDADMILKSGKTTERIAKVLQIPQEVFDDTIKMLRLKRMLRFKEDEDLINQVRELESKILGYKSSVQFIVSSATLKPKGYKQMALRFLVGFEPSTIQIYNRNVIDSFTYSNNVNELVKEIGDVGGLILVSKDYGKKYVDQITDNLNAEGYRAMKAISGRKFLEKFSNGDVDFLVGSASYYGVAVRGIDEPKRLKYVIFYGVPKTKLPLEDSLNNPLTALKIGELLKLDVTEYRKRLIYLSPAELQAVKIALRNKVSLNGKLGDLVEDLTKLKDIILDTIKANKIDKLVSDSFVIKKDTNKHYIFFPDIITYIQGSGRSSRIMNGGLTLGLSVVLVDDLELFDILNKKLRRIAEVTFMNFDELKLDEVREKLNKSRSDGSGGRSMNFKTALLVVESPTKARTISKIFGRGVRREIYGIPVYETIIIDDHSNTIIYTNIIASKGHLTDLTTEELGYYGVEINDKDIVVNYSPLYRCMSCGKTITKKVSTCPYCGSSMINSSEKIVNAIRLISTEVDEVYIATDPDQEGEKIAYDIYSLISPYNQNIFRISYNEITKTAVLNAIKSKAKINESLVKAQIARRIEDRWIGFELSSVLRSALNDNNNGTGRVQGPVLKWVVGKTSEYKANIGYVVDINIGDYVVRKFFKTKKDAETFISQLNVKVTKIAERTSTIDPLPPFTTDSLLIDAYSKFRINSSLAMKVAQELFEAGLITYHRTDSIHISPYGISIAREYLEKIGSNDFVGRSWGNEGAHEAIRPTRSMDVEELRKEIEENPFQFGIKFTWAHYRLYDLIFRRFIGSQMSSATATYTTYEININGELYTVELPTKVHGGFSSIYGIRVYNLDESHLTTRIRKGSLVSLLTYADVIRLMKDTNIGRPSTYVRTVQSLIRHGYVVESKKRSFLIATNKGQKVYEILNKYFSDMVSESRTSHLITKIDKINRNELSAEDVIMDLLNEIKNIKLVNPLQSEQYV</sequence>
<dbReference type="EC" id="5.6.2.-" evidence="2"/>
<dbReference type="EMBL" id="CP000077">
    <property type="status" value="NOT_ANNOTATED_CDS"/>
    <property type="molecule type" value="Genomic_DNA"/>
</dbReference>
<dbReference type="RefSeq" id="WP_015385600.1">
    <property type="nucleotide sequence ID" value="NC_007181.1"/>
</dbReference>
<dbReference type="SMR" id="P0DW67"/>
<dbReference type="GeneID" id="14551824"/>
<dbReference type="Proteomes" id="UP000001018">
    <property type="component" value="Chromosome"/>
</dbReference>
<dbReference type="GO" id="GO:0005737">
    <property type="term" value="C:cytoplasm"/>
    <property type="evidence" value="ECO:0007669"/>
    <property type="project" value="UniProtKB-SubCell"/>
</dbReference>
<dbReference type="GO" id="GO:0005524">
    <property type="term" value="F:ATP binding"/>
    <property type="evidence" value="ECO:0007669"/>
    <property type="project" value="UniProtKB-KW"/>
</dbReference>
<dbReference type="GO" id="GO:0003677">
    <property type="term" value="F:DNA binding"/>
    <property type="evidence" value="ECO:0007669"/>
    <property type="project" value="UniProtKB-KW"/>
</dbReference>
<dbReference type="GO" id="GO:0160097">
    <property type="term" value="F:reverse gyrase activity"/>
    <property type="evidence" value="ECO:0007669"/>
    <property type="project" value="UniProtKB-ARBA"/>
</dbReference>
<dbReference type="GO" id="GO:0008270">
    <property type="term" value="F:zinc ion binding"/>
    <property type="evidence" value="ECO:0007669"/>
    <property type="project" value="UniProtKB-KW"/>
</dbReference>
<dbReference type="GO" id="GO:0006265">
    <property type="term" value="P:DNA topological change"/>
    <property type="evidence" value="ECO:0007669"/>
    <property type="project" value="InterPro"/>
</dbReference>
<dbReference type="CDD" id="cd18798">
    <property type="entry name" value="SF2_C_reverse_gyrase"/>
    <property type="match status" value="1"/>
</dbReference>
<dbReference type="CDD" id="cd00186">
    <property type="entry name" value="TOP1Ac"/>
    <property type="match status" value="1"/>
</dbReference>
<dbReference type="Gene3D" id="2.60.510.20">
    <property type="match status" value="1"/>
</dbReference>
<dbReference type="Gene3D" id="3.40.50.140">
    <property type="match status" value="1"/>
</dbReference>
<dbReference type="Gene3D" id="3.40.50.300">
    <property type="entry name" value="P-loop containing nucleotide triphosphate hydrolases"/>
    <property type="match status" value="3"/>
</dbReference>
<dbReference type="Gene3D" id="1.10.460.10">
    <property type="entry name" value="Topoisomerase I, domain 2"/>
    <property type="match status" value="1"/>
</dbReference>
<dbReference type="Gene3D" id="1.10.290.10">
    <property type="entry name" value="Topoisomerase I, domain 4"/>
    <property type="match status" value="1"/>
</dbReference>
<dbReference type="InterPro" id="IPR011545">
    <property type="entry name" value="DEAD/DEAH_box_helicase_dom"/>
</dbReference>
<dbReference type="InterPro" id="IPR014001">
    <property type="entry name" value="Helicase_ATP-bd"/>
</dbReference>
<dbReference type="InterPro" id="IPR027417">
    <property type="entry name" value="P-loop_NTPase"/>
</dbReference>
<dbReference type="InterPro" id="IPR005736">
    <property type="entry name" value="Reverse_gyrase"/>
</dbReference>
<dbReference type="InterPro" id="IPR003601">
    <property type="entry name" value="Topo_IA_2"/>
</dbReference>
<dbReference type="InterPro" id="IPR013497">
    <property type="entry name" value="Topo_IA_cen"/>
</dbReference>
<dbReference type="InterPro" id="IPR013824">
    <property type="entry name" value="Topo_IA_cen_sub1"/>
</dbReference>
<dbReference type="InterPro" id="IPR013826">
    <property type="entry name" value="Topo_IA_cen_sub3"/>
</dbReference>
<dbReference type="InterPro" id="IPR023405">
    <property type="entry name" value="Topo_IA_core_domain"/>
</dbReference>
<dbReference type="InterPro" id="IPR003602">
    <property type="entry name" value="Topo_IA_DNA-bd_dom"/>
</dbReference>
<dbReference type="InterPro" id="IPR006171">
    <property type="entry name" value="TOPRIM_dom"/>
</dbReference>
<dbReference type="InterPro" id="IPR040569">
    <property type="entry name" value="Znf_Rg"/>
</dbReference>
<dbReference type="NCBIfam" id="TIGR01054">
    <property type="entry name" value="rgy"/>
    <property type="match status" value="1"/>
</dbReference>
<dbReference type="PANTHER" id="PTHR43505">
    <property type="entry name" value="REVERSE GYRASE"/>
    <property type="match status" value="1"/>
</dbReference>
<dbReference type="PANTHER" id="PTHR43505:SF1">
    <property type="entry name" value="REVERSE GYRASE"/>
    <property type="match status" value="1"/>
</dbReference>
<dbReference type="Pfam" id="PF00270">
    <property type="entry name" value="DEAD"/>
    <property type="match status" value="1"/>
</dbReference>
<dbReference type="Pfam" id="PF01131">
    <property type="entry name" value="Topoisom_bac"/>
    <property type="match status" value="1"/>
</dbReference>
<dbReference type="Pfam" id="PF01751">
    <property type="entry name" value="Toprim"/>
    <property type="match status" value="1"/>
</dbReference>
<dbReference type="Pfam" id="PF17915">
    <property type="entry name" value="zf_Rg"/>
    <property type="match status" value="1"/>
</dbReference>
<dbReference type="PRINTS" id="PR00417">
    <property type="entry name" value="PRTPISMRASEI"/>
</dbReference>
<dbReference type="SMART" id="SM00487">
    <property type="entry name" value="DEXDc"/>
    <property type="match status" value="1"/>
</dbReference>
<dbReference type="SMART" id="SM00437">
    <property type="entry name" value="TOP1Ac"/>
    <property type="match status" value="1"/>
</dbReference>
<dbReference type="SMART" id="SM00436">
    <property type="entry name" value="TOP1Bc"/>
    <property type="match status" value="1"/>
</dbReference>
<dbReference type="SMART" id="SM00493">
    <property type="entry name" value="TOPRIM"/>
    <property type="match status" value="1"/>
</dbReference>
<dbReference type="SUPFAM" id="SSF52540">
    <property type="entry name" value="P-loop containing nucleoside triphosphate hydrolases"/>
    <property type="match status" value="2"/>
</dbReference>
<dbReference type="SUPFAM" id="SSF56712">
    <property type="entry name" value="Prokaryotic type I DNA topoisomerase"/>
    <property type="match status" value="1"/>
</dbReference>
<dbReference type="PROSITE" id="PS51192">
    <property type="entry name" value="HELICASE_ATP_BIND_1"/>
    <property type="match status" value="1"/>
</dbReference>
<dbReference type="PROSITE" id="PS52039">
    <property type="entry name" value="TOPO_IA_2"/>
    <property type="match status" value="1"/>
</dbReference>
<dbReference type="PROSITE" id="PS50880">
    <property type="entry name" value="TOPRIM"/>
    <property type="match status" value="1"/>
</dbReference>
<dbReference type="PROSITE" id="PS52037">
    <property type="entry name" value="ZF_RG_C"/>
    <property type="match status" value="1"/>
</dbReference>
<dbReference type="PROSITE" id="PS52036">
    <property type="entry name" value="ZF_RG_N"/>
    <property type="match status" value="1"/>
</dbReference>
<comment type="function">
    <text evidence="2">Modifies the topological state of DNA by introducing positive supercoils in an ATP-dependent process, increasing the linking number in steps of +1. Binds to single-stranded DNA, transiently cleaves and then rejoins the ends, introducing a positive supercoil in the process. The scissile phosphodiester is attacked by the catalytic tyrosine of the enzyme, resulting in the formation of a DNA-(5'-phosphotyrosyl)-enzyme intermediate. Probably involved in rewinding DNA strands in regions of the chromosome that have opened up to allow replication, transcription, DNA repair and/or for DNA protection.</text>
</comment>
<comment type="function">
    <text evidence="12">Might be a cell cycle protein (PubMed:17307872).</text>
</comment>
<comment type="catalytic activity">
    <reaction evidence="2">
        <text>ATP + H2O = ADP + phosphate + H(+)</text>
        <dbReference type="Rhea" id="RHEA:13065"/>
        <dbReference type="ChEBI" id="CHEBI:15377"/>
        <dbReference type="ChEBI" id="CHEBI:15378"/>
        <dbReference type="ChEBI" id="CHEBI:30616"/>
        <dbReference type="ChEBI" id="CHEBI:43474"/>
        <dbReference type="ChEBI" id="CHEBI:456216"/>
    </reaction>
</comment>
<comment type="cofactor">
    <cofactor evidence="1">
        <name>Zn(2+)</name>
        <dbReference type="ChEBI" id="CHEBI:29105"/>
    </cofactor>
    <text evidence="1">Binds 2 zinc ions per subunit.</text>
</comment>
<comment type="cofactor">
    <cofactor evidence="5">
        <name>Mg(2+)</name>
        <dbReference type="ChEBI" id="CHEBI:18420"/>
    </cofactor>
</comment>
<comment type="subunit">
    <text evidence="2">Monomer.</text>
</comment>
<comment type="subcellular location">
    <subcellularLocation>
        <location evidence="3">Cytoplasm</location>
    </subcellularLocation>
</comment>
<comment type="induction">
    <text evidence="9">Transcription is strongly induced at the G1/S transition.</text>
</comment>
<comment type="domain">
    <text evidence="2">Introduction of positive supercoils requires the cooperation of both domains. The helicase-like domain probably does not directly unwind DNA, but more likely acts by driving ATP-dependent conformational changes within the whole enzyme. A beta hairpin in the 'latch' region of the N-terminal domain plays a regulatory role in the enzyme, repressing topoisomerase activity in the absence of ATP and preventing the enzyme from acting as an ATP-independent relaxing enzyme; it also helps to coordinate nucleotide hydrolysis by the ATPase domain with the supercoiling activity of the topoisomerase domain.</text>
</comment>
<comment type="miscellaneous">
    <text evidence="11">This enzyme is the only unique feature of hyperthermophilic bacteria/archaea known and seems to be essential for adaptation to life at high temperatures. It may play a role in stabilization of DNA at high temperatures.</text>
</comment>
<comment type="similarity">
    <text evidence="11">In the N-terminal section; belongs to the DEAD box helicase family. DDVD subfamily.</text>
</comment>
<comment type="similarity">
    <text evidence="11">In the C-terminal section; belongs to the type IA topoisomerase family.</text>
</comment>
<keyword id="KW-0067">ATP-binding</keyword>
<keyword id="KW-0963">Cytoplasm</keyword>
<keyword id="KW-0238">DNA-binding</keyword>
<keyword id="KW-0413">Isomerase</keyword>
<keyword id="KW-0460">Magnesium</keyword>
<keyword id="KW-0479">Metal-binding</keyword>
<keyword id="KW-0547">Nucleotide-binding</keyword>
<keyword id="KW-1185">Reference proteome</keyword>
<keyword id="KW-0677">Repeat</keyword>
<keyword id="KW-0799">Topoisomerase</keyword>
<keyword id="KW-0862">Zinc</keyword>
<keyword id="KW-0863">Zinc-finger</keyword>
<gene>
    <name evidence="2" type="primary">rgy2</name>
    <name evidence="10" type="synonym">topR2</name>
    <name evidence="12" type="ordered locus">Saci_1321.5</name>
</gene>